<accession>Q8K928</accession>
<feature type="chain" id="PRO_0000109959" description="Heme chaperone HemW">
    <location>
        <begin position="1"/>
        <end position="376"/>
    </location>
</feature>
<feature type="domain" description="Radical SAM core" evidence="4">
    <location>
        <begin position="1"/>
        <end position="236"/>
    </location>
</feature>
<feature type="binding site" evidence="1">
    <location>
        <position position="10"/>
    </location>
    <ligand>
        <name>S-adenosyl-L-methionine</name>
        <dbReference type="ChEBI" id="CHEBI:59789"/>
        <label>1</label>
    </ligand>
</feature>
<feature type="binding site" evidence="1">
    <location>
        <position position="16"/>
    </location>
    <ligand>
        <name>[4Fe-4S] cluster</name>
        <dbReference type="ChEBI" id="CHEBI:49883"/>
        <note>4Fe-4S-S-AdoMet</note>
    </ligand>
</feature>
<feature type="binding site" evidence="1">
    <location>
        <position position="20"/>
    </location>
    <ligand>
        <name>[4Fe-4S] cluster</name>
        <dbReference type="ChEBI" id="CHEBI:49883"/>
        <note>4Fe-4S-S-AdoMet</note>
    </ligand>
</feature>
<feature type="binding site" evidence="1">
    <location>
        <position position="23"/>
    </location>
    <ligand>
        <name>[4Fe-4S] cluster</name>
        <dbReference type="ChEBI" id="CHEBI:49883"/>
        <note>4Fe-4S-S-AdoMet</note>
    </ligand>
</feature>
<feature type="binding site" evidence="1">
    <location>
        <position position="66"/>
    </location>
    <ligand>
        <name>S-adenosyl-L-methionine</name>
        <dbReference type="ChEBI" id="CHEBI:59789"/>
        <label>1</label>
    </ligand>
</feature>
<feature type="binding site" evidence="1">
    <location>
        <begin position="67"/>
        <end position="68"/>
    </location>
    <ligand>
        <name>S-adenosyl-L-methionine</name>
        <dbReference type="ChEBI" id="CHEBI:59789"/>
        <label>2</label>
    </ligand>
</feature>
<feature type="binding site" evidence="1">
    <location>
        <position position="99"/>
    </location>
    <ligand>
        <name>S-adenosyl-L-methionine</name>
        <dbReference type="ChEBI" id="CHEBI:59789"/>
        <label>1</label>
    </ligand>
</feature>
<feature type="binding site" evidence="1">
    <location>
        <position position="126"/>
    </location>
    <ligand>
        <name>S-adenosyl-L-methionine</name>
        <dbReference type="ChEBI" id="CHEBI:59789"/>
        <label>2</label>
    </ligand>
</feature>
<feature type="binding site" evidence="1">
    <location>
        <position position="138"/>
    </location>
    <ligand>
        <name>S-adenosyl-L-methionine</name>
        <dbReference type="ChEBI" id="CHEBI:59789"/>
        <label>2</label>
    </ligand>
</feature>
<feature type="binding site" evidence="1">
    <location>
        <position position="162"/>
    </location>
    <ligand>
        <name>S-adenosyl-L-methionine</name>
        <dbReference type="ChEBI" id="CHEBI:59789"/>
        <label>2</label>
    </ligand>
</feature>
<protein>
    <recommendedName>
        <fullName>Heme chaperone HemW</fullName>
    </recommendedName>
    <alternativeName>
        <fullName>Oxygen-independent coproporphyrinogen-III oxidase-like protein BUsg_532</fullName>
    </alternativeName>
</protein>
<proteinExistence type="inferred from homology"/>
<organism>
    <name type="scientific">Buchnera aphidicola subsp. Schizaphis graminum (strain Sg)</name>
    <dbReference type="NCBI Taxonomy" id="198804"/>
    <lineage>
        <taxon>Bacteria</taxon>
        <taxon>Pseudomonadati</taxon>
        <taxon>Pseudomonadota</taxon>
        <taxon>Gammaproteobacteria</taxon>
        <taxon>Enterobacterales</taxon>
        <taxon>Erwiniaceae</taxon>
        <taxon>Buchnera</taxon>
    </lineage>
</organism>
<sequence>MFKLPPISLYIHIPWCIKKCGYCDFYSYVNKSFIPEKEYIDHLLKDLEKDLSLIKEREINSIFIGGGTPSLLKSSSIKKMMREIKKRINISNTAEITIEANPTTLEYKRFFNYKKSGINRFSIGVQTFNSDLLKKIERTYNKREAILAVEEIKKINKNFNLDIMYGLPNQSLKDVLLDLQYAVKYNPTHISWYQLTLEPNTPFYVKKLNLPNENNIFKMLVEGEKFLKQSGYKKYEISSYAKLNYECQHNLNYWNFGDYIGIGCSAHGKITQINGDIIRTIKNKNINDFMNGKYLKHKNFVLKKDKPFEYFMNIFRLYKPVLKRQFEERTNINQNYIKEKIKKAIEKGYLKNKIDFWDTTKKGKMFLNSLLKIFLD</sequence>
<name>HEMW_BUCAP</name>
<dbReference type="EMBL" id="AE013218">
    <property type="protein sequence ID" value="AAM68073.1"/>
    <property type="molecule type" value="Genomic_DNA"/>
</dbReference>
<dbReference type="RefSeq" id="WP_011054039.1">
    <property type="nucleotide sequence ID" value="NC_004061.1"/>
</dbReference>
<dbReference type="SMR" id="Q8K928"/>
<dbReference type="STRING" id="198804.BUsg_532"/>
<dbReference type="GeneID" id="93004007"/>
<dbReference type="KEGG" id="bas:BUsg_532"/>
<dbReference type="eggNOG" id="COG0635">
    <property type="taxonomic scope" value="Bacteria"/>
</dbReference>
<dbReference type="HOGENOM" id="CLU_027579_2_1_6"/>
<dbReference type="Proteomes" id="UP000000416">
    <property type="component" value="Chromosome"/>
</dbReference>
<dbReference type="GO" id="GO:0005737">
    <property type="term" value="C:cytoplasm"/>
    <property type="evidence" value="ECO:0000250"/>
    <property type="project" value="UniProtKB"/>
</dbReference>
<dbReference type="GO" id="GO:0051539">
    <property type="term" value="F:4 iron, 4 sulfur cluster binding"/>
    <property type="evidence" value="ECO:0000250"/>
    <property type="project" value="UniProtKB"/>
</dbReference>
<dbReference type="GO" id="GO:0004109">
    <property type="term" value="F:coproporphyrinogen oxidase activity"/>
    <property type="evidence" value="ECO:0007669"/>
    <property type="project" value="InterPro"/>
</dbReference>
<dbReference type="GO" id="GO:0046872">
    <property type="term" value="F:metal ion binding"/>
    <property type="evidence" value="ECO:0007669"/>
    <property type="project" value="UniProtKB-KW"/>
</dbReference>
<dbReference type="GO" id="GO:0006779">
    <property type="term" value="P:porphyrin-containing compound biosynthetic process"/>
    <property type="evidence" value="ECO:0000250"/>
    <property type="project" value="UniProtKB"/>
</dbReference>
<dbReference type="CDD" id="cd01335">
    <property type="entry name" value="Radical_SAM"/>
    <property type="match status" value="1"/>
</dbReference>
<dbReference type="FunFam" id="3.20.20.70:FF:000124">
    <property type="entry name" value="Heme chaperone HemW"/>
    <property type="match status" value="1"/>
</dbReference>
<dbReference type="Gene3D" id="3.20.20.70">
    <property type="entry name" value="Aldolase class I"/>
    <property type="match status" value="1"/>
</dbReference>
<dbReference type="InterPro" id="IPR013785">
    <property type="entry name" value="Aldolase_TIM"/>
</dbReference>
<dbReference type="InterPro" id="IPR034505">
    <property type="entry name" value="Coproporphyrinogen-III_oxidase"/>
</dbReference>
<dbReference type="InterPro" id="IPR006638">
    <property type="entry name" value="Elp3/MiaA/NifB-like_rSAM"/>
</dbReference>
<dbReference type="InterPro" id="IPR010723">
    <property type="entry name" value="HemN_C"/>
</dbReference>
<dbReference type="InterPro" id="IPR004559">
    <property type="entry name" value="HemW-like"/>
</dbReference>
<dbReference type="InterPro" id="IPR007197">
    <property type="entry name" value="rSAM"/>
</dbReference>
<dbReference type="NCBIfam" id="TIGR00539">
    <property type="entry name" value="hemN_rel"/>
    <property type="match status" value="1"/>
</dbReference>
<dbReference type="PANTHER" id="PTHR13932">
    <property type="entry name" value="COPROPORPHYRINIGEN III OXIDASE"/>
    <property type="match status" value="1"/>
</dbReference>
<dbReference type="PANTHER" id="PTHR13932:SF5">
    <property type="entry name" value="RADICAL S-ADENOSYL METHIONINE DOMAIN-CONTAINING PROTEIN 1, MITOCHONDRIAL"/>
    <property type="match status" value="1"/>
</dbReference>
<dbReference type="Pfam" id="PF06969">
    <property type="entry name" value="HemN_C"/>
    <property type="match status" value="1"/>
</dbReference>
<dbReference type="Pfam" id="PF04055">
    <property type="entry name" value="Radical_SAM"/>
    <property type="match status" value="1"/>
</dbReference>
<dbReference type="SFLD" id="SFLDG01065">
    <property type="entry name" value="anaerobic_coproporphyrinogen-I"/>
    <property type="match status" value="1"/>
</dbReference>
<dbReference type="SFLD" id="SFLDG01082">
    <property type="entry name" value="B12-binding_domain_containing"/>
    <property type="match status" value="1"/>
</dbReference>
<dbReference type="SFLD" id="SFLDF00562">
    <property type="entry name" value="HemN-like__clustered_with_heat"/>
    <property type="match status" value="1"/>
</dbReference>
<dbReference type="SFLD" id="SFLDF00288">
    <property type="entry name" value="HemN-like__clustered_with_nucl"/>
    <property type="match status" value="1"/>
</dbReference>
<dbReference type="SMART" id="SM00729">
    <property type="entry name" value="Elp3"/>
    <property type="match status" value="1"/>
</dbReference>
<dbReference type="SUPFAM" id="SSF102114">
    <property type="entry name" value="Radical SAM enzymes"/>
    <property type="match status" value="1"/>
</dbReference>
<dbReference type="PROSITE" id="PS51918">
    <property type="entry name" value="RADICAL_SAM"/>
    <property type="match status" value="1"/>
</dbReference>
<evidence type="ECO:0000250" key="1">
    <source>
        <dbReference type="UniProtKB" id="P32131"/>
    </source>
</evidence>
<evidence type="ECO:0000250" key="2">
    <source>
        <dbReference type="UniProtKB" id="P52062"/>
    </source>
</evidence>
<evidence type="ECO:0000250" key="3">
    <source>
        <dbReference type="UniProtKB" id="Q9CGF7"/>
    </source>
</evidence>
<evidence type="ECO:0000255" key="4">
    <source>
        <dbReference type="PROSITE-ProRule" id="PRU01266"/>
    </source>
</evidence>
<evidence type="ECO:0000305" key="5"/>
<gene>
    <name evidence="2" type="primary">hemW</name>
    <name type="ordered locus">BUsg_532</name>
</gene>
<comment type="function">
    <text evidence="1 2">Probably acts as a heme chaperone, transferring heme to an unknown acceptor. Binds one molecule of heme per monomer, possibly covalently (By similarity). Binds 1 [4Fe-4S] cluster. The cluster is coordinated with 3 cysteines and an exchangeable S-adenosyl-L-methionine (By similarity).</text>
</comment>
<comment type="cofactor">
    <cofactor evidence="4">
        <name>[4Fe-4S] cluster</name>
        <dbReference type="ChEBI" id="CHEBI:49883"/>
    </cofactor>
</comment>
<comment type="subcellular location">
    <subcellularLocation>
        <location evidence="3">Cytoplasm</location>
    </subcellularLocation>
</comment>
<comment type="miscellaneous">
    <text evidence="1">Might carry two S-adenosyl-L-methionine binding sites with only one binding to the iron-sulfur cluster.</text>
</comment>
<comment type="similarity">
    <text evidence="5">Belongs to the anaerobic coproporphyrinogen-III oxidase family. HemW subfamily.</text>
</comment>
<keyword id="KW-0004">4Fe-4S</keyword>
<keyword id="KW-0143">Chaperone</keyword>
<keyword id="KW-0963">Cytoplasm</keyword>
<keyword id="KW-0349">Heme</keyword>
<keyword id="KW-0408">Iron</keyword>
<keyword id="KW-0411">Iron-sulfur</keyword>
<keyword id="KW-0479">Metal-binding</keyword>
<keyword id="KW-0949">S-adenosyl-L-methionine</keyword>
<reference key="1">
    <citation type="journal article" date="2002" name="Science">
        <title>50 million years of genomic stasis in endosymbiotic bacteria.</title>
        <authorList>
            <person name="Tamas I."/>
            <person name="Klasson L."/>
            <person name="Canbaeck B."/>
            <person name="Naeslund A.K."/>
            <person name="Eriksson A.-S."/>
            <person name="Wernegreen J.J."/>
            <person name="Sandstroem J.P."/>
            <person name="Moran N.A."/>
            <person name="Andersson S.G.E."/>
        </authorList>
    </citation>
    <scope>NUCLEOTIDE SEQUENCE [LARGE SCALE GENOMIC DNA]</scope>
    <source>
        <strain>Sg</strain>
    </source>
</reference>